<proteinExistence type="inferred from homology"/>
<protein>
    <recommendedName>
        <fullName evidence="1">Siroheme synthase</fullName>
    </recommendedName>
    <domain>
        <recommendedName>
            <fullName evidence="1">Uroporphyrinogen-III C-methyltransferase</fullName>
            <shortName evidence="1">Urogen III methylase</shortName>
            <ecNumber evidence="1">2.1.1.107</ecNumber>
        </recommendedName>
        <alternativeName>
            <fullName evidence="1">SUMT</fullName>
        </alternativeName>
        <alternativeName>
            <fullName evidence="1">Uroporphyrinogen III methylase</fullName>
            <shortName evidence="1">UROM</shortName>
        </alternativeName>
    </domain>
    <domain>
        <recommendedName>
            <fullName evidence="1">Precorrin-2 dehydrogenase</fullName>
            <ecNumber evidence="1">1.3.1.76</ecNumber>
        </recommendedName>
    </domain>
    <domain>
        <recommendedName>
            <fullName evidence="1">Sirohydrochlorin ferrochelatase</fullName>
            <ecNumber evidence="1">4.99.1.4</ecNumber>
        </recommendedName>
    </domain>
</protein>
<feature type="chain" id="PRO_0000330563" description="Siroheme synthase">
    <location>
        <begin position="1"/>
        <end position="457"/>
    </location>
</feature>
<feature type="region of interest" description="Precorrin-2 dehydrogenase /sirohydrochlorin ferrochelatase" evidence="1">
    <location>
        <begin position="1"/>
        <end position="204"/>
    </location>
</feature>
<feature type="region of interest" description="Uroporphyrinogen-III C-methyltransferase" evidence="1">
    <location>
        <begin position="216"/>
        <end position="457"/>
    </location>
</feature>
<feature type="active site" description="Proton acceptor" evidence="1">
    <location>
        <position position="248"/>
    </location>
</feature>
<feature type="active site" description="Proton donor" evidence="1">
    <location>
        <position position="270"/>
    </location>
</feature>
<feature type="binding site" evidence="1">
    <location>
        <begin position="22"/>
        <end position="23"/>
    </location>
    <ligand>
        <name>NAD(+)</name>
        <dbReference type="ChEBI" id="CHEBI:57540"/>
    </ligand>
</feature>
<feature type="binding site" evidence="1">
    <location>
        <begin position="43"/>
        <end position="44"/>
    </location>
    <ligand>
        <name>NAD(+)</name>
        <dbReference type="ChEBI" id="CHEBI:57540"/>
    </ligand>
</feature>
<feature type="binding site" evidence="1">
    <location>
        <position position="225"/>
    </location>
    <ligand>
        <name>S-adenosyl-L-methionine</name>
        <dbReference type="ChEBI" id="CHEBI:59789"/>
    </ligand>
</feature>
<feature type="binding site" evidence="1">
    <location>
        <begin position="301"/>
        <end position="303"/>
    </location>
    <ligand>
        <name>S-adenosyl-L-methionine</name>
        <dbReference type="ChEBI" id="CHEBI:59789"/>
    </ligand>
</feature>
<feature type="binding site" evidence="1">
    <location>
        <position position="306"/>
    </location>
    <ligand>
        <name>S-adenosyl-L-methionine</name>
        <dbReference type="ChEBI" id="CHEBI:59789"/>
    </ligand>
</feature>
<feature type="binding site" evidence="1">
    <location>
        <begin position="331"/>
        <end position="332"/>
    </location>
    <ligand>
        <name>S-adenosyl-L-methionine</name>
        <dbReference type="ChEBI" id="CHEBI:59789"/>
    </ligand>
</feature>
<feature type="binding site" evidence="1">
    <location>
        <position position="382"/>
    </location>
    <ligand>
        <name>S-adenosyl-L-methionine</name>
        <dbReference type="ChEBI" id="CHEBI:59789"/>
    </ligand>
</feature>
<feature type="binding site" evidence="1">
    <location>
        <position position="411"/>
    </location>
    <ligand>
        <name>S-adenosyl-L-methionine</name>
        <dbReference type="ChEBI" id="CHEBI:59789"/>
    </ligand>
</feature>
<feature type="modified residue" description="Phosphoserine" evidence="1">
    <location>
        <position position="128"/>
    </location>
</feature>
<accession>Q3YWQ3</accession>
<name>CYSG_SHISS</name>
<organism>
    <name type="scientific">Shigella sonnei (strain Ss046)</name>
    <dbReference type="NCBI Taxonomy" id="300269"/>
    <lineage>
        <taxon>Bacteria</taxon>
        <taxon>Pseudomonadati</taxon>
        <taxon>Pseudomonadota</taxon>
        <taxon>Gammaproteobacteria</taxon>
        <taxon>Enterobacterales</taxon>
        <taxon>Enterobacteriaceae</taxon>
        <taxon>Shigella</taxon>
    </lineage>
</organism>
<sequence>MDHLPIFCQLRDRDCLIVGGGDVAERKARLLLDAGARLTVNALAFIPQFTAWADAGMLTLVEGPFDESLLDTCWLAIAATDDDTLNQRVSEAAEARRIFCNVVDAPKAASFIMPSIIDRSPLMVAVSSGGTSPVLARLLREKLESLLPLHLGQVAKYAGQLRGRVKQQFATMSERRRFWEKLFVNDRLAQSLANNDQKAITETTEQLINEPLDHRGEVVLVGAGPGDAGLLTLKGLQQIQQADVVVYDRLVSDDIMNLVRRDADRVFVGKRAGYHCVPQEEINQILLREAQKGKRVVRLKGGDPFIFGRGGEELETLCNAGIPFSVVPGITAASGCSAYSGIPLTHRDYAQSVRLITGHLKTGGELDWENLAAEKQTLVFYMGLNQAATIQQKLIEHGMPGEMPVAIVENGTAVTQRVIDGTLTQLGELAQQMNSPSLIIIGRVVGLRDKLNWFSNH</sequence>
<keyword id="KW-0169">Cobalamin biosynthesis</keyword>
<keyword id="KW-0456">Lyase</keyword>
<keyword id="KW-0489">Methyltransferase</keyword>
<keyword id="KW-0511">Multifunctional enzyme</keyword>
<keyword id="KW-0520">NAD</keyword>
<keyword id="KW-0560">Oxidoreductase</keyword>
<keyword id="KW-0597">Phosphoprotein</keyword>
<keyword id="KW-0627">Porphyrin biosynthesis</keyword>
<keyword id="KW-1185">Reference proteome</keyword>
<keyword id="KW-0949">S-adenosyl-L-methionine</keyword>
<keyword id="KW-0808">Transferase</keyword>
<dbReference type="EC" id="2.1.1.107" evidence="1"/>
<dbReference type="EC" id="1.3.1.76" evidence="1"/>
<dbReference type="EC" id="4.99.1.4" evidence="1"/>
<dbReference type="EMBL" id="CP000038">
    <property type="protein sequence ID" value="AAZ90059.1"/>
    <property type="molecule type" value="Genomic_DNA"/>
</dbReference>
<dbReference type="RefSeq" id="WP_000349881.1">
    <property type="nucleotide sequence ID" value="NC_007384.1"/>
</dbReference>
<dbReference type="SMR" id="Q3YWQ3"/>
<dbReference type="GeneID" id="93778629"/>
<dbReference type="KEGG" id="ssn:SSON_3499"/>
<dbReference type="HOGENOM" id="CLU_011276_2_0_6"/>
<dbReference type="UniPathway" id="UPA00148">
    <property type="reaction ID" value="UER00211"/>
</dbReference>
<dbReference type="UniPathway" id="UPA00148">
    <property type="reaction ID" value="UER00222"/>
</dbReference>
<dbReference type="UniPathway" id="UPA00262">
    <property type="reaction ID" value="UER00211"/>
</dbReference>
<dbReference type="UniPathway" id="UPA00262">
    <property type="reaction ID" value="UER00222"/>
</dbReference>
<dbReference type="UniPathway" id="UPA00262">
    <property type="reaction ID" value="UER00376"/>
</dbReference>
<dbReference type="Proteomes" id="UP000002529">
    <property type="component" value="Chromosome"/>
</dbReference>
<dbReference type="GO" id="GO:0051287">
    <property type="term" value="F:NAD binding"/>
    <property type="evidence" value="ECO:0007669"/>
    <property type="project" value="InterPro"/>
</dbReference>
<dbReference type="GO" id="GO:0043115">
    <property type="term" value="F:precorrin-2 dehydrogenase activity"/>
    <property type="evidence" value="ECO:0007669"/>
    <property type="project" value="UniProtKB-UniRule"/>
</dbReference>
<dbReference type="GO" id="GO:0051266">
    <property type="term" value="F:sirohydrochlorin ferrochelatase activity"/>
    <property type="evidence" value="ECO:0007669"/>
    <property type="project" value="UniProtKB-EC"/>
</dbReference>
<dbReference type="GO" id="GO:0004851">
    <property type="term" value="F:uroporphyrin-III C-methyltransferase activity"/>
    <property type="evidence" value="ECO:0007669"/>
    <property type="project" value="UniProtKB-UniRule"/>
</dbReference>
<dbReference type="GO" id="GO:0009236">
    <property type="term" value="P:cobalamin biosynthetic process"/>
    <property type="evidence" value="ECO:0007669"/>
    <property type="project" value="UniProtKB-UniRule"/>
</dbReference>
<dbReference type="GO" id="GO:0032259">
    <property type="term" value="P:methylation"/>
    <property type="evidence" value="ECO:0007669"/>
    <property type="project" value="UniProtKB-KW"/>
</dbReference>
<dbReference type="GO" id="GO:0019354">
    <property type="term" value="P:siroheme biosynthetic process"/>
    <property type="evidence" value="ECO:0007669"/>
    <property type="project" value="UniProtKB-UniRule"/>
</dbReference>
<dbReference type="CDD" id="cd11642">
    <property type="entry name" value="SUMT"/>
    <property type="match status" value="1"/>
</dbReference>
<dbReference type="FunFam" id="1.10.8.210:FF:000001">
    <property type="entry name" value="Siroheme synthase"/>
    <property type="match status" value="1"/>
</dbReference>
<dbReference type="FunFam" id="3.30.160.110:FF:000001">
    <property type="entry name" value="Siroheme synthase"/>
    <property type="match status" value="1"/>
</dbReference>
<dbReference type="FunFam" id="3.30.950.10:FF:000001">
    <property type="entry name" value="Siroheme synthase"/>
    <property type="match status" value="1"/>
</dbReference>
<dbReference type="FunFam" id="3.40.1010.10:FF:000001">
    <property type="entry name" value="Siroheme synthase"/>
    <property type="match status" value="1"/>
</dbReference>
<dbReference type="FunFam" id="3.40.50.720:FF:000092">
    <property type="entry name" value="Siroheme synthase"/>
    <property type="match status" value="1"/>
</dbReference>
<dbReference type="Gene3D" id="3.40.1010.10">
    <property type="entry name" value="Cobalt-precorrin-4 Transmethylase, Domain 1"/>
    <property type="match status" value="1"/>
</dbReference>
<dbReference type="Gene3D" id="3.30.950.10">
    <property type="entry name" value="Methyltransferase, Cobalt-precorrin-4 Transmethylase, Domain 2"/>
    <property type="match status" value="1"/>
</dbReference>
<dbReference type="Gene3D" id="3.40.50.720">
    <property type="entry name" value="NAD(P)-binding Rossmann-like Domain"/>
    <property type="match status" value="1"/>
</dbReference>
<dbReference type="Gene3D" id="1.10.8.210">
    <property type="entry name" value="Sirohaem synthase, dimerisation domain"/>
    <property type="match status" value="1"/>
</dbReference>
<dbReference type="Gene3D" id="3.30.160.110">
    <property type="entry name" value="Siroheme synthase, domain 2"/>
    <property type="match status" value="1"/>
</dbReference>
<dbReference type="HAMAP" id="MF_01646">
    <property type="entry name" value="Siroheme_synth"/>
    <property type="match status" value="1"/>
</dbReference>
<dbReference type="InterPro" id="IPR000878">
    <property type="entry name" value="4pyrrol_Mease"/>
</dbReference>
<dbReference type="InterPro" id="IPR035996">
    <property type="entry name" value="4pyrrol_Methylase_sf"/>
</dbReference>
<dbReference type="InterPro" id="IPR014777">
    <property type="entry name" value="4pyrrole_Mease_sub1"/>
</dbReference>
<dbReference type="InterPro" id="IPR014776">
    <property type="entry name" value="4pyrrole_Mease_sub2"/>
</dbReference>
<dbReference type="InterPro" id="IPR006366">
    <property type="entry name" value="CobA/CysG_C"/>
</dbReference>
<dbReference type="InterPro" id="IPR036291">
    <property type="entry name" value="NAD(P)-bd_dom_sf"/>
</dbReference>
<dbReference type="InterPro" id="IPR050161">
    <property type="entry name" value="Siro_Cobalamin_biosynth"/>
</dbReference>
<dbReference type="InterPro" id="IPR037115">
    <property type="entry name" value="Sirohaem_synt_dimer_dom_sf"/>
</dbReference>
<dbReference type="InterPro" id="IPR012409">
    <property type="entry name" value="Sirohaem_synth"/>
</dbReference>
<dbReference type="InterPro" id="IPR028281">
    <property type="entry name" value="Sirohaem_synthase_central"/>
</dbReference>
<dbReference type="InterPro" id="IPR019478">
    <property type="entry name" value="Sirohaem_synthase_dimer_dom"/>
</dbReference>
<dbReference type="InterPro" id="IPR006367">
    <property type="entry name" value="Sirohaem_synthase_N"/>
</dbReference>
<dbReference type="InterPro" id="IPR003043">
    <property type="entry name" value="Uropor_MeTrfase_CS"/>
</dbReference>
<dbReference type="NCBIfam" id="TIGR01469">
    <property type="entry name" value="cobA_cysG_Cterm"/>
    <property type="match status" value="1"/>
</dbReference>
<dbReference type="NCBIfam" id="TIGR01470">
    <property type="entry name" value="cysG_Nterm"/>
    <property type="match status" value="1"/>
</dbReference>
<dbReference type="NCBIfam" id="NF004790">
    <property type="entry name" value="PRK06136.1"/>
    <property type="match status" value="1"/>
</dbReference>
<dbReference type="NCBIfam" id="NF007922">
    <property type="entry name" value="PRK10637.1"/>
    <property type="match status" value="1"/>
</dbReference>
<dbReference type="PANTHER" id="PTHR45790:SF1">
    <property type="entry name" value="SIROHEME SYNTHASE"/>
    <property type="match status" value="1"/>
</dbReference>
<dbReference type="PANTHER" id="PTHR45790">
    <property type="entry name" value="SIROHEME SYNTHASE-RELATED"/>
    <property type="match status" value="1"/>
</dbReference>
<dbReference type="Pfam" id="PF10414">
    <property type="entry name" value="CysG_dimeriser"/>
    <property type="match status" value="1"/>
</dbReference>
<dbReference type="Pfam" id="PF13241">
    <property type="entry name" value="NAD_binding_7"/>
    <property type="match status" value="1"/>
</dbReference>
<dbReference type="Pfam" id="PF14824">
    <property type="entry name" value="Sirohm_synth_M"/>
    <property type="match status" value="1"/>
</dbReference>
<dbReference type="Pfam" id="PF00590">
    <property type="entry name" value="TP_methylase"/>
    <property type="match status" value="1"/>
</dbReference>
<dbReference type="PIRSF" id="PIRSF036426">
    <property type="entry name" value="Sirohaem_synth"/>
    <property type="match status" value="1"/>
</dbReference>
<dbReference type="SUPFAM" id="SSF51735">
    <property type="entry name" value="NAD(P)-binding Rossmann-fold domains"/>
    <property type="match status" value="1"/>
</dbReference>
<dbReference type="SUPFAM" id="SSF75615">
    <property type="entry name" value="Siroheme synthase middle domains-like"/>
    <property type="match status" value="1"/>
</dbReference>
<dbReference type="SUPFAM" id="SSF53790">
    <property type="entry name" value="Tetrapyrrole methylase"/>
    <property type="match status" value="1"/>
</dbReference>
<dbReference type="PROSITE" id="PS00839">
    <property type="entry name" value="SUMT_1"/>
    <property type="match status" value="1"/>
</dbReference>
<dbReference type="PROSITE" id="PS00840">
    <property type="entry name" value="SUMT_2"/>
    <property type="match status" value="1"/>
</dbReference>
<gene>
    <name evidence="1" type="primary">cysG</name>
    <name type="ordered locus">SSON_3499</name>
</gene>
<reference key="1">
    <citation type="journal article" date="2005" name="Nucleic Acids Res.">
        <title>Genome dynamics and diversity of Shigella species, the etiologic agents of bacillary dysentery.</title>
        <authorList>
            <person name="Yang F."/>
            <person name="Yang J."/>
            <person name="Zhang X."/>
            <person name="Chen L."/>
            <person name="Jiang Y."/>
            <person name="Yan Y."/>
            <person name="Tang X."/>
            <person name="Wang J."/>
            <person name="Xiong Z."/>
            <person name="Dong J."/>
            <person name="Xue Y."/>
            <person name="Zhu Y."/>
            <person name="Xu X."/>
            <person name="Sun L."/>
            <person name="Chen S."/>
            <person name="Nie H."/>
            <person name="Peng J."/>
            <person name="Xu J."/>
            <person name="Wang Y."/>
            <person name="Yuan Z."/>
            <person name="Wen Y."/>
            <person name="Yao Z."/>
            <person name="Shen Y."/>
            <person name="Qiang B."/>
            <person name="Hou Y."/>
            <person name="Yu J."/>
            <person name="Jin Q."/>
        </authorList>
    </citation>
    <scope>NUCLEOTIDE SEQUENCE [LARGE SCALE GENOMIC DNA]</scope>
    <source>
        <strain>Ss046</strain>
    </source>
</reference>
<evidence type="ECO:0000255" key="1">
    <source>
        <dbReference type="HAMAP-Rule" id="MF_01646"/>
    </source>
</evidence>
<comment type="function">
    <text evidence="1">Multifunctional enzyme that catalyzes the SAM-dependent methylations of uroporphyrinogen III at position C-2 and C-7 to form precorrin-2 via precorrin-1. Then it catalyzes the NAD-dependent ring dehydrogenation of precorrin-2 to yield sirohydrochlorin. Finally, it catalyzes the ferrochelation of sirohydrochlorin to yield siroheme.</text>
</comment>
<comment type="catalytic activity">
    <reaction evidence="1">
        <text>uroporphyrinogen III + 2 S-adenosyl-L-methionine = precorrin-2 + 2 S-adenosyl-L-homocysteine + H(+)</text>
        <dbReference type="Rhea" id="RHEA:32459"/>
        <dbReference type="ChEBI" id="CHEBI:15378"/>
        <dbReference type="ChEBI" id="CHEBI:57308"/>
        <dbReference type="ChEBI" id="CHEBI:57856"/>
        <dbReference type="ChEBI" id="CHEBI:58827"/>
        <dbReference type="ChEBI" id="CHEBI:59789"/>
        <dbReference type="EC" id="2.1.1.107"/>
    </reaction>
</comment>
<comment type="catalytic activity">
    <reaction evidence="1">
        <text>precorrin-2 + NAD(+) = sirohydrochlorin + NADH + 2 H(+)</text>
        <dbReference type="Rhea" id="RHEA:15613"/>
        <dbReference type="ChEBI" id="CHEBI:15378"/>
        <dbReference type="ChEBI" id="CHEBI:57540"/>
        <dbReference type="ChEBI" id="CHEBI:57945"/>
        <dbReference type="ChEBI" id="CHEBI:58351"/>
        <dbReference type="ChEBI" id="CHEBI:58827"/>
        <dbReference type="EC" id="1.3.1.76"/>
    </reaction>
</comment>
<comment type="catalytic activity">
    <reaction evidence="1">
        <text>siroheme + 2 H(+) = sirohydrochlorin + Fe(2+)</text>
        <dbReference type="Rhea" id="RHEA:24360"/>
        <dbReference type="ChEBI" id="CHEBI:15378"/>
        <dbReference type="ChEBI" id="CHEBI:29033"/>
        <dbReference type="ChEBI" id="CHEBI:58351"/>
        <dbReference type="ChEBI" id="CHEBI:60052"/>
        <dbReference type="EC" id="4.99.1.4"/>
    </reaction>
</comment>
<comment type="pathway">
    <text evidence="1">Cofactor biosynthesis; adenosylcobalamin biosynthesis; precorrin-2 from uroporphyrinogen III: step 1/1.</text>
</comment>
<comment type="pathway">
    <text evidence="1">Cofactor biosynthesis; adenosylcobalamin biosynthesis; sirohydrochlorin from precorrin-2: step 1/1.</text>
</comment>
<comment type="pathway">
    <text evidence="1">Porphyrin-containing compound metabolism; siroheme biosynthesis; precorrin-2 from uroporphyrinogen III: step 1/1.</text>
</comment>
<comment type="pathway">
    <text evidence="1">Porphyrin-containing compound metabolism; siroheme biosynthesis; siroheme from sirohydrochlorin: step 1/1.</text>
</comment>
<comment type="pathway">
    <text evidence="1">Porphyrin-containing compound metabolism; siroheme biosynthesis; sirohydrochlorin from precorrin-2: step 1/1.</text>
</comment>
<comment type="similarity">
    <text evidence="1">In the N-terminal section; belongs to the precorrin-2 dehydrogenase / sirohydrochlorin ferrochelatase family.</text>
</comment>
<comment type="similarity">
    <text evidence="1">In the C-terminal section; belongs to the precorrin methyltransferase family.</text>
</comment>